<comment type="similarity">
    <text evidence="1">Belongs to the bacterial ribosomal protein bL33 family.</text>
</comment>
<accession>Q6A6J5</accession>
<dbReference type="EMBL" id="AE017283">
    <property type="protein sequence ID" value="AAT83618.1"/>
    <property type="molecule type" value="Genomic_DNA"/>
</dbReference>
<dbReference type="PDB" id="8CRX">
    <property type="method" value="EM"/>
    <property type="resolution" value="2.78 A"/>
    <property type="chains" value="0=1-56"/>
</dbReference>
<dbReference type="PDB" id="8CVM">
    <property type="method" value="EM"/>
    <property type="resolution" value="2.66 A"/>
    <property type="chains" value="0=1-56"/>
</dbReference>
<dbReference type="PDBsum" id="8CRX"/>
<dbReference type="PDBsum" id="8CVM"/>
<dbReference type="SMR" id="Q6A6J5"/>
<dbReference type="EnsemblBacteria" id="AAT83618">
    <property type="protein sequence ID" value="AAT83618"/>
    <property type="gene ID" value="PPA1897"/>
</dbReference>
<dbReference type="KEGG" id="pac:PPA1897"/>
<dbReference type="eggNOG" id="COG0267">
    <property type="taxonomic scope" value="Bacteria"/>
</dbReference>
<dbReference type="HOGENOM" id="CLU_190949_0_2_11"/>
<dbReference type="Proteomes" id="UP000000603">
    <property type="component" value="Chromosome"/>
</dbReference>
<dbReference type="GO" id="GO:0005737">
    <property type="term" value="C:cytoplasm"/>
    <property type="evidence" value="ECO:0007669"/>
    <property type="project" value="UniProtKB-ARBA"/>
</dbReference>
<dbReference type="GO" id="GO:1990904">
    <property type="term" value="C:ribonucleoprotein complex"/>
    <property type="evidence" value="ECO:0007669"/>
    <property type="project" value="UniProtKB-KW"/>
</dbReference>
<dbReference type="GO" id="GO:0005840">
    <property type="term" value="C:ribosome"/>
    <property type="evidence" value="ECO:0007669"/>
    <property type="project" value="UniProtKB-KW"/>
</dbReference>
<dbReference type="GO" id="GO:0003735">
    <property type="term" value="F:structural constituent of ribosome"/>
    <property type="evidence" value="ECO:0007669"/>
    <property type="project" value="InterPro"/>
</dbReference>
<dbReference type="GO" id="GO:0006412">
    <property type="term" value="P:translation"/>
    <property type="evidence" value="ECO:0007669"/>
    <property type="project" value="UniProtKB-UniRule"/>
</dbReference>
<dbReference type="Gene3D" id="2.20.28.120">
    <property type="entry name" value="Ribosomal protein L33"/>
    <property type="match status" value="1"/>
</dbReference>
<dbReference type="HAMAP" id="MF_00294">
    <property type="entry name" value="Ribosomal_bL33"/>
    <property type="match status" value="1"/>
</dbReference>
<dbReference type="InterPro" id="IPR001705">
    <property type="entry name" value="Ribosomal_bL33"/>
</dbReference>
<dbReference type="InterPro" id="IPR018264">
    <property type="entry name" value="Ribosomal_bL33_CS"/>
</dbReference>
<dbReference type="InterPro" id="IPR038584">
    <property type="entry name" value="Ribosomal_bL33_sf"/>
</dbReference>
<dbReference type="InterPro" id="IPR011332">
    <property type="entry name" value="Ribosomal_zn-bd"/>
</dbReference>
<dbReference type="NCBIfam" id="NF001764">
    <property type="entry name" value="PRK00504.1"/>
    <property type="match status" value="1"/>
</dbReference>
<dbReference type="NCBIfam" id="NF001860">
    <property type="entry name" value="PRK00595.1"/>
    <property type="match status" value="1"/>
</dbReference>
<dbReference type="NCBIfam" id="TIGR01023">
    <property type="entry name" value="rpmG_bact"/>
    <property type="match status" value="1"/>
</dbReference>
<dbReference type="PANTHER" id="PTHR43168">
    <property type="entry name" value="50S RIBOSOMAL PROTEIN L33, CHLOROPLASTIC"/>
    <property type="match status" value="1"/>
</dbReference>
<dbReference type="PANTHER" id="PTHR43168:SF2">
    <property type="entry name" value="LARGE RIBOSOMAL SUBUNIT PROTEIN BL33C"/>
    <property type="match status" value="1"/>
</dbReference>
<dbReference type="Pfam" id="PF00471">
    <property type="entry name" value="Ribosomal_L33"/>
    <property type="match status" value="1"/>
</dbReference>
<dbReference type="SUPFAM" id="SSF57829">
    <property type="entry name" value="Zn-binding ribosomal proteins"/>
    <property type="match status" value="1"/>
</dbReference>
<dbReference type="PROSITE" id="PS00582">
    <property type="entry name" value="RIBOSOMAL_L33"/>
    <property type="match status" value="1"/>
</dbReference>
<feature type="chain" id="PRO_0000356616" description="Large ribosomal subunit protein bL33A">
    <location>
        <begin position="1"/>
        <end position="56"/>
    </location>
</feature>
<feature type="strand" evidence="2">
    <location>
        <begin position="11"/>
        <end position="16"/>
    </location>
</feature>
<feature type="turn" evidence="2">
    <location>
        <begin position="17"/>
        <end position="19"/>
    </location>
</feature>
<feature type="strand" evidence="2">
    <location>
        <begin position="24"/>
        <end position="27"/>
    </location>
</feature>
<feature type="strand" evidence="2">
    <location>
        <begin position="30"/>
        <end position="33"/>
    </location>
</feature>
<feature type="strand" evidence="2">
    <location>
        <begin position="38"/>
        <end position="43"/>
    </location>
</feature>
<feature type="turn" evidence="2">
    <location>
        <begin position="44"/>
        <end position="47"/>
    </location>
</feature>
<feature type="strand" evidence="2">
    <location>
        <begin position="48"/>
        <end position="54"/>
    </location>
</feature>
<keyword id="KW-0002">3D-structure</keyword>
<keyword id="KW-0687">Ribonucleoprotein</keyword>
<keyword id="KW-0689">Ribosomal protein</keyword>
<proteinExistence type="evidence at protein level"/>
<sequence>MAKKSGDVRPKITLACTECKERNYITKKNRRNNPDRMEMAKFCPRCRKHTAHRETR</sequence>
<protein>
    <recommendedName>
        <fullName evidence="1">Large ribosomal subunit protein bL33A</fullName>
    </recommendedName>
    <alternativeName>
        <fullName evidence="1">50S ribosomal protein L33 1</fullName>
    </alternativeName>
</protein>
<evidence type="ECO:0000255" key="1">
    <source>
        <dbReference type="HAMAP-Rule" id="MF_00294"/>
    </source>
</evidence>
<evidence type="ECO:0007829" key="2">
    <source>
        <dbReference type="PDB" id="8CVM"/>
    </source>
</evidence>
<reference key="1">
    <citation type="journal article" date="2004" name="Science">
        <title>The complete genome sequence of Propionibacterium acnes, a commensal of human skin.</title>
        <authorList>
            <person name="Brueggemann H."/>
            <person name="Henne A."/>
            <person name="Hoster F."/>
            <person name="Liesegang H."/>
            <person name="Wiezer A."/>
            <person name="Strittmatter A."/>
            <person name="Hujer S."/>
            <person name="Duerre P."/>
            <person name="Gottschalk G."/>
        </authorList>
    </citation>
    <scope>NUCLEOTIDE SEQUENCE [LARGE SCALE GENOMIC DNA]</scope>
    <source>
        <strain>DSM 16379 / KPA171202</strain>
    </source>
</reference>
<organism>
    <name type="scientific">Cutibacterium acnes (strain DSM 16379 / KPA171202)</name>
    <name type="common">Propionibacterium acnes</name>
    <dbReference type="NCBI Taxonomy" id="267747"/>
    <lineage>
        <taxon>Bacteria</taxon>
        <taxon>Bacillati</taxon>
        <taxon>Actinomycetota</taxon>
        <taxon>Actinomycetes</taxon>
        <taxon>Propionibacteriales</taxon>
        <taxon>Propionibacteriaceae</taxon>
        <taxon>Cutibacterium</taxon>
    </lineage>
</organism>
<name>RL331_CUTAK</name>
<gene>
    <name evidence="1" type="primary">rpmG1</name>
    <name type="ordered locus">PPA1897</name>
</gene>